<name>SYP_LEGPL</name>
<reference key="1">
    <citation type="journal article" date="2004" name="Nat. Genet.">
        <title>Evidence in the Legionella pneumophila genome for exploitation of host cell functions and high genome plasticity.</title>
        <authorList>
            <person name="Cazalet C."/>
            <person name="Rusniok C."/>
            <person name="Brueggemann H."/>
            <person name="Zidane N."/>
            <person name="Magnier A."/>
            <person name="Ma L."/>
            <person name="Tichit M."/>
            <person name="Jarraud S."/>
            <person name="Bouchier C."/>
            <person name="Vandenesch F."/>
            <person name="Kunst F."/>
            <person name="Etienne J."/>
            <person name="Glaser P."/>
            <person name="Buchrieser C."/>
        </authorList>
    </citation>
    <scope>NUCLEOTIDE SEQUENCE [LARGE SCALE GENOMIC DNA]</scope>
    <source>
        <strain>Lens</strain>
    </source>
</reference>
<keyword id="KW-0030">Aminoacyl-tRNA synthetase</keyword>
<keyword id="KW-0067">ATP-binding</keyword>
<keyword id="KW-0963">Cytoplasm</keyword>
<keyword id="KW-0436">Ligase</keyword>
<keyword id="KW-0547">Nucleotide-binding</keyword>
<keyword id="KW-0648">Protein biosynthesis</keyword>
<gene>
    <name evidence="1" type="primary">proS</name>
    <name type="ordered locus">lpl0731</name>
</gene>
<organism>
    <name type="scientific">Legionella pneumophila (strain Lens)</name>
    <dbReference type="NCBI Taxonomy" id="297245"/>
    <lineage>
        <taxon>Bacteria</taxon>
        <taxon>Pseudomonadati</taxon>
        <taxon>Pseudomonadota</taxon>
        <taxon>Gammaproteobacteria</taxon>
        <taxon>Legionellales</taxon>
        <taxon>Legionellaceae</taxon>
        <taxon>Legionella</taxon>
    </lineage>
</organism>
<evidence type="ECO:0000255" key="1">
    <source>
        <dbReference type="HAMAP-Rule" id="MF_01569"/>
    </source>
</evidence>
<protein>
    <recommendedName>
        <fullName evidence="1">Proline--tRNA ligase</fullName>
        <ecNumber evidence="1">6.1.1.15</ecNumber>
    </recommendedName>
    <alternativeName>
        <fullName evidence="1">Prolyl-tRNA synthetase</fullName>
        <shortName evidence="1">ProRS</shortName>
    </alternativeName>
</protein>
<comment type="function">
    <text evidence="1">Catalyzes the attachment of proline to tRNA(Pro) in a two-step reaction: proline is first activated by ATP to form Pro-AMP and then transferred to the acceptor end of tRNA(Pro). As ProRS can inadvertently accommodate and process non-cognate amino acids such as alanine and cysteine, to avoid such errors it has two additional distinct editing activities against alanine. One activity is designated as 'pretransfer' editing and involves the tRNA(Pro)-independent hydrolysis of activated Ala-AMP. The other activity is designated 'posttransfer' editing and involves deacylation of mischarged Ala-tRNA(Pro). The misacylated Cys-tRNA(Pro) is not edited by ProRS.</text>
</comment>
<comment type="catalytic activity">
    <reaction evidence="1">
        <text>tRNA(Pro) + L-proline + ATP = L-prolyl-tRNA(Pro) + AMP + diphosphate</text>
        <dbReference type="Rhea" id="RHEA:14305"/>
        <dbReference type="Rhea" id="RHEA-COMP:9700"/>
        <dbReference type="Rhea" id="RHEA-COMP:9702"/>
        <dbReference type="ChEBI" id="CHEBI:30616"/>
        <dbReference type="ChEBI" id="CHEBI:33019"/>
        <dbReference type="ChEBI" id="CHEBI:60039"/>
        <dbReference type="ChEBI" id="CHEBI:78442"/>
        <dbReference type="ChEBI" id="CHEBI:78532"/>
        <dbReference type="ChEBI" id="CHEBI:456215"/>
        <dbReference type="EC" id="6.1.1.15"/>
    </reaction>
</comment>
<comment type="subunit">
    <text evidence="1">Homodimer.</text>
</comment>
<comment type="subcellular location">
    <subcellularLocation>
        <location evidence="1">Cytoplasm</location>
    </subcellularLocation>
</comment>
<comment type="domain">
    <text evidence="1">Consists of three domains: the N-terminal catalytic domain, the editing domain and the C-terminal anticodon-binding domain.</text>
</comment>
<comment type="similarity">
    <text evidence="1">Belongs to the class-II aminoacyl-tRNA synthetase family. ProS type 1 subfamily.</text>
</comment>
<proteinExistence type="inferred from homology"/>
<feature type="chain" id="PRO_0000248712" description="Proline--tRNA ligase">
    <location>
        <begin position="1"/>
        <end position="569"/>
    </location>
</feature>
<sequence>MRASQWFLVTQKETPNDAEIASHQLMLRSGMIRKLGSGLYTWMPLGLRVLRKVENIVREEMNKTHAMELLMPSVQPAELWQETGRWETFGGQLLTMKDSNQREYCFGPTHEEVITDIMRNELQSYKQLPVNFYQIQTKFRDEIRPRFGVMRAREFIMKDAYSFHLSLESLQETYKDMYQAYCRIFDRMGLKYRAVEADTGAIGGSASHEFQVLAESGEDLIFYSDASDYAANIEQATSLKPPKANQSCNETITLVDTPNKKTIDEVASFLGIASNQTIKTLIVKGKEHPMVALVLRGDDELNEVKATKHPLVHSPLSFIDEELILKTLKTPLGSIGPVKLNIPVIVDHQALAMPSFVCGANQADKHFINAAWERDAKYDDAYDLRNVKEGDPSPDGRGTLHCCRGIEVGHVFQLGDKYAKAMNASVINEQGQLQTMIMGCYGLGITRVVAAAIEQHHDEHGIIWPQALAPFQVNIIPLNGARSHAVKEQAESLYQQLKSHGIDVLLDDRNERAGVLFADNDLIGIPHRLVVSERNLEQGCIEYKSRTSSETQLINLDKVVNFIIELINK</sequence>
<dbReference type="EC" id="6.1.1.15" evidence="1"/>
<dbReference type="EMBL" id="CR628337">
    <property type="protein sequence ID" value="CAH14965.1"/>
    <property type="molecule type" value="Genomic_DNA"/>
</dbReference>
<dbReference type="RefSeq" id="WP_011214905.1">
    <property type="nucleotide sequence ID" value="NC_006369.1"/>
</dbReference>
<dbReference type="SMR" id="Q5WYK5"/>
<dbReference type="KEGG" id="lpf:lpl0731"/>
<dbReference type="LegioList" id="lpl0731"/>
<dbReference type="HOGENOM" id="CLU_016739_0_0_6"/>
<dbReference type="Proteomes" id="UP000002517">
    <property type="component" value="Chromosome"/>
</dbReference>
<dbReference type="GO" id="GO:0005829">
    <property type="term" value="C:cytosol"/>
    <property type="evidence" value="ECO:0007669"/>
    <property type="project" value="TreeGrafter"/>
</dbReference>
<dbReference type="GO" id="GO:0002161">
    <property type="term" value="F:aminoacyl-tRNA deacylase activity"/>
    <property type="evidence" value="ECO:0007669"/>
    <property type="project" value="InterPro"/>
</dbReference>
<dbReference type="GO" id="GO:0005524">
    <property type="term" value="F:ATP binding"/>
    <property type="evidence" value="ECO:0007669"/>
    <property type="project" value="UniProtKB-UniRule"/>
</dbReference>
<dbReference type="GO" id="GO:0004827">
    <property type="term" value="F:proline-tRNA ligase activity"/>
    <property type="evidence" value="ECO:0007669"/>
    <property type="project" value="UniProtKB-UniRule"/>
</dbReference>
<dbReference type="GO" id="GO:0006433">
    <property type="term" value="P:prolyl-tRNA aminoacylation"/>
    <property type="evidence" value="ECO:0007669"/>
    <property type="project" value="UniProtKB-UniRule"/>
</dbReference>
<dbReference type="CDD" id="cd04334">
    <property type="entry name" value="ProRS-INS"/>
    <property type="match status" value="1"/>
</dbReference>
<dbReference type="CDD" id="cd00861">
    <property type="entry name" value="ProRS_anticodon_short"/>
    <property type="match status" value="1"/>
</dbReference>
<dbReference type="CDD" id="cd00779">
    <property type="entry name" value="ProRS_core_prok"/>
    <property type="match status" value="1"/>
</dbReference>
<dbReference type="FunFam" id="3.30.930.10:FF:000043">
    <property type="entry name" value="Proline--tRNA ligase"/>
    <property type="match status" value="1"/>
</dbReference>
<dbReference type="Gene3D" id="3.40.50.800">
    <property type="entry name" value="Anticodon-binding domain"/>
    <property type="match status" value="1"/>
</dbReference>
<dbReference type="Gene3D" id="3.30.930.10">
    <property type="entry name" value="Bira Bifunctional Protein, Domain 2"/>
    <property type="match status" value="2"/>
</dbReference>
<dbReference type="Gene3D" id="3.90.960.10">
    <property type="entry name" value="YbaK/aminoacyl-tRNA synthetase-associated domain"/>
    <property type="match status" value="1"/>
</dbReference>
<dbReference type="HAMAP" id="MF_01569">
    <property type="entry name" value="Pro_tRNA_synth_type1"/>
    <property type="match status" value="1"/>
</dbReference>
<dbReference type="InterPro" id="IPR002314">
    <property type="entry name" value="aa-tRNA-synt_IIb"/>
</dbReference>
<dbReference type="InterPro" id="IPR006195">
    <property type="entry name" value="aa-tRNA-synth_II"/>
</dbReference>
<dbReference type="InterPro" id="IPR045864">
    <property type="entry name" value="aa-tRNA-synth_II/BPL/LPL"/>
</dbReference>
<dbReference type="InterPro" id="IPR004154">
    <property type="entry name" value="Anticodon-bd"/>
</dbReference>
<dbReference type="InterPro" id="IPR036621">
    <property type="entry name" value="Anticodon-bd_dom_sf"/>
</dbReference>
<dbReference type="InterPro" id="IPR002316">
    <property type="entry name" value="Pro-tRNA-ligase_IIa"/>
</dbReference>
<dbReference type="InterPro" id="IPR004500">
    <property type="entry name" value="Pro-tRNA-synth_IIa_bac-type"/>
</dbReference>
<dbReference type="InterPro" id="IPR023717">
    <property type="entry name" value="Pro-tRNA-Synthase_IIa_type1"/>
</dbReference>
<dbReference type="InterPro" id="IPR050062">
    <property type="entry name" value="Pro-tRNA_synthetase"/>
</dbReference>
<dbReference type="InterPro" id="IPR044140">
    <property type="entry name" value="ProRS_anticodon_short"/>
</dbReference>
<dbReference type="InterPro" id="IPR033730">
    <property type="entry name" value="ProRS_core_prok"/>
</dbReference>
<dbReference type="InterPro" id="IPR036754">
    <property type="entry name" value="YbaK/aa-tRNA-synt-asso_dom_sf"/>
</dbReference>
<dbReference type="InterPro" id="IPR007214">
    <property type="entry name" value="YbaK/aa-tRNA-synth-assoc-dom"/>
</dbReference>
<dbReference type="NCBIfam" id="NF006625">
    <property type="entry name" value="PRK09194.1"/>
    <property type="match status" value="1"/>
</dbReference>
<dbReference type="NCBIfam" id="TIGR00409">
    <property type="entry name" value="proS_fam_II"/>
    <property type="match status" value="1"/>
</dbReference>
<dbReference type="PANTHER" id="PTHR42753">
    <property type="entry name" value="MITOCHONDRIAL RIBOSOME PROTEIN L39/PROLYL-TRNA LIGASE FAMILY MEMBER"/>
    <property type="match status" value="1"/>
</dbReference>
<dbReference type="PANTHER" id="PTHR42753:SF2">
    <property type="entry name" value="PROLINE--TRNA LIGASE"/>
    <property type="match status" value="1"/>
</dbReference>
<dbReference type="Pfam" id="PF03129">
    <property type="entry name" value="HGTP_anticodon"/>
    <property type="match status" value="1"/>
</dbReference>
<dbReference type="Pfam" id="PF00587">
    <property type="entry name" value="tRNA-synt_2b"/>
    <property type="match status" value="1"/>
</dbReference>
<dbReference type="Pfam" id="PF04073">
    <property type="entry name" value="tRNA_edit"/>
    <property type="match status" value="1"/>
</dbReference>
<dbReference type="PIRSF" id="PIRSF001535">
    <property type="entry name" value="ProRS_1"/>
    <property type="match status" value="1"/>
</dbReference>
<dbReference type="PRINTS" id="PR01046">
    <property type="entry name" value="TRNASYNTHPRO"/>
</dbReference>
<dbReference type="SUPFAM" id="SSF52954">
    <property type="entry name" value="Class II aaRS ABD-related"/>
    <property type="match status" value="1"/>
</dbReference>
<dbReference type="SUPFAM" id="SSF55681">
    <property type="entry name" value="Class II aaRS and biotin synthetases"/>
    <property type="match status" value="1"/>
</dbReference>
<dbReference type="SUPFAM" id="SSF55826">
    <property type="entry name" value="YbaK/ProRS associated domain"/>
    <property type="match status" value="1"/>
</dbReference>
<dbReference type="PROSITE" id="PS50862">
    <property type="entry name" value="AA_TRNA_LIGASE_II"/>
    <property type="match status" value="1"/>
</dbReference>
<accession>Q5WYK5</accession>